<comment type="function">
    <text evidence="1">Involved in the biosynthesis of ADP-glucose, a building block required for the elongation reactions to produce glycogen. Catalyzes the reaction between ATP and alpha-D-glucose 1-phosphate (G1P) to produce pyrophosphate and ADP-Glc.</text>
</comment>
<comment type="catalytic activity">
    <reaction evidence="1">
        <text>alpha-D-glucose 1-phosphate + ATP + H(+) = ADP-alpha-D-glucose + diphosphate</text>
        <dbReference type="Rhea" id="RHEA:12120"/>
        <dbReference type="ChEBI" id="CHEBI:15378"/>
        <dbReference type="ChEBI" id="CHEBI:30616"/>
        <dbReference type="ChEBI" id="CHEBI:33019"/>
        <dbReference type="ChEBI" id="CHEBI:57498"/>
        <dbReference type="ChEBI" id="CHEBI:58601"/>
        <dbReference type="EC" id="2.7.7.27"/>
    </reaction>
</comment>
<comment type="pathway">
    <text evidence="1">Glycan biosynthesis; glycogen biosynthesis.</text>
</comment>
<comment type="subunit">
    <text evidence="1">Homotetramer.</text>
</comment>
<comment type="similarity">
    <text evidence="1">Belongs to the bacterial/plant glucose-1-phosphate adenylyltransferase family.</text>
</comment>
<evidence type="ECO:0000255" key="1">
    <source>
        <dbReference type="HAMAP-Rule" id="MF_00624"/>
    </source>
</evidence>
<reference key="1">
    <citation type="journal article" date="2006" name="Proc. Natl. Acad. Sci. U.S.A.">
        <title>Multireplicon genome architecture of Lactobacillus salivarius.</title>
        <authorList>
            <person name="Claesson M.J."/>
            <person name="Li Y."/>
            <person name="Leahy S."/>
            <person name="Canchaya C."/>
            <person name="van Pijkeren J.P."/>
            <person name="Cerdeno-Tarraga A.M."/>
            <person name="Parkhill J."/>
            <person name="Flynn S."/>
            <person name="O'Sullivan G.C."/>
            <person name="Collins J.K."/>
            <person name="Higgins D."/>
            <person name="Shanahan F."/>
            <person name="Fitzgerald G.F."/>
            <person name="van Sinderen D."/>
            <person name="O'Toole P.W."/>
        </authorList>
    </citation>
    <scope>NUCLEOTIDE SEQUENCE [LARGE SCALE GENOMIC DNA]</scope>
    <source>
        <strain>UCC118</strain>
    </source>
</reference>
<gene>
    <name evidence="1" type="primary">glgC</name>
    <name type="ordered locus">LSL_1293</name>
</gene>
<keyword id="KW-0067">ATP-binding</keyword>
<keyword id="KW-0119">Carbohydrate metabolism</keyword>
<keyword id="KW-0320">Glycogen biosynthesis</keyword>
<keyword id="KW-0321">Glycogen metabolism</keyword>
<keyword id="KW-0547">Nucleotide-binding</keyword>
<keyword id="KW-0548">Nucleotidyltransferase</keyword>
<keyword id="KW-1185">Reference proteome</keyword>
<keyword id="KW-0808">Transferase</keyword>
<name>GLGC_LIGS1</name>
<organism>
    <name type="scientific">Ligilactobacillus salivarius (strain UCC118)</name>
    <name type="common">Lactobacillus salivarius</name>
    <dbReference type="NCBI Taxonomy" id="362948"/>
    <lineage>
        <taxon>Bacteria</taxon>
        <taxon>Bacillati</taxon>
        <taxon>Bacillota</taxon>
        <taxon>Bacilli</taxon>
        <taxon>Lactobacillales</taxon>
        <taxon>Lactobacillaceae</taxon>
        <taxon>Ligilactobacillus</taxon>
    </lineage>
</organism>
<protein>
    <recommendedName>
        <fullName evidence="1">Glucose-1-phosphate adenylyltransferase</fullName>
        <ecNumber evidence="1">2.7.7.27</ecNumber>
    </recommendedName>
    <alternativeName>
        <fullName evidence="1">ADP-glucose pyrophosphorylase</fullName>
        <shortName evidence="1">ADPGlc PPase</shortName>
    </alternativeName>
    <alternativeName>
        <fullName evidence="1">ADP-glucose synthase</fullName>
    </alternativeName>
</protein>
<sequence length="380" mass="42100">MKNEMLGVILAGGKGTRLGKLTHNQAKPAVPFGGRYRIIDFTLSNCVNSGVKNIGVITQYQPLNLNAHIGNGASWGLDDLNAGVTILQPYSNNEGSKWFEGTAHAIYQNIGYIDQMDPEYILILSGDHIYKMDYEAMLDQHKETGASLTVAVIDVPWDEASRFGIMNTDDNNRIIDFEEKPAEPKSNHASMGIYIFNWKRLREVLVNSFTRNQDMVDFGKNVIPYYLKSGESVFAYNFKGYWKDVGTIDSLWHANMEFLDENNELNLQDRTWRIYSRNPIAPPQIIAETAEIKDAMIVDGSYIAGKVDHSILSANVRIQTGSVVTDSVIMPGAKIGKNVTIHRAIIGEGAVIGDDVVIDGTDEIAVIGNKEVVGVTSHEE</sequence>
<dbReference type="EC" id="2.7.7.27" evidence="1"/>
<dbReference type="EMBL" id="CP000233">
    <property type="protein sequence ID" value="ABE00100.1"/>
    <property type="molecule type" value="Genomic_DNA"/>
</dbReference>
<dbReference type="RefSeq" id="WP_004563805.1">
    <property type="nucleotide sequence ID" value="NC_007929.1"/>
</dbReference>
<dbReference type="RefSeq" id="YP_536183.1">
    <property type="nucleotide sequence ID" value="NC_007929.1"/>
</dbReference>
<dbReference type="SMR" id="Q1WSM9"/>
<dbReference type="STRING" id="362948.LSL_1293"/>
<dbReference type="KEGG" id="lsl:LSL_1293"/>
<dbReference type="PATRIC" id="fig|362948.14.peg.1367"/>
<dbReference type="HOGENOM" id="CLU_029499_14_0_9"/>
<dbReference type="OrthoDB" id="9801810at2"/>
<dbReference type="UniPathway" id="UPA00164"/>
<dbReference type="Proteomes" id="UP000006559">
    <property type="component" value="Chromosome"/>
</dbReference>
<dbReference type="GO" id="GO:0005524">
    <property type="term" value="F:ATP binding"/>
    <property type="evidence" value="ECO:0007669"/>
    <property type="project" value="UniProtKB-KW"/>
</dbReference>
<dbReference type="GO" id="GO:0008878">
    <property type="term" value="F:glucose-1-phosphate adenylyltransferase activity"/>
    <property type="evidence" value="ECO:0007669"/>
    <property type="project" value="UniProtKB-UniRule"/>
</dbReference>
<dbReference type="GO" id="GO:0005978">
    <property type="term" value="P:glycogen biosynthetic process"/>
    <property type="evidence" value="ECO:0007669"/>
    <property type="project" value="UniProtKB-UniRule"/>
</dbReference>
<dbReference type="CDD" id="cd02508">
    <property type="entry name" value="ADP_Glucose_PP"/>
    <property type="match status" value="1"/>
</dbReference>
<dbReference type="CDD" id="cd04651">
    <property type="entry name" value="LbH_G1P_AT_C"/>
    <property type="match status" value="1"/>
</dbReference>
<dbReference type="Gene3D" id="2.160.10.10">
    <property type="entry name" value="Hexapeptide repeat proteins"/>
    <property type="match status" value="1"/>
</dbReference>
<dbReference type="Gene3D" id="3.90.550.10">
    <property type="entry name" value="Spore Coat Polysaccharide Biosynthesis Protein SpsA, Chain A"/>
    <property type="match status" value="1"/>
</dbReference>
<dbReference type="HAMAP" id="MF_00624">
    <property type="entry name" value="GlgC"/>
    <property type="match status" value="1"/>
</dbReference>
<dbReference type="InterPro" id="IPR011831">
    <property type="entry name" value="ADP-Glc_PPase"/>
</dbReference>
<dbReference type="InterPro" id="IPR005836">
    <property type="entry name" value="ADP_Glu_pyroP_CS"/>
</dbReference>
<dbReference type="InterPro" id="IPR023049">
    <property type="entry name" value="GlgC_bac"/>
</dbReference>
<dbReference type="InterPro" id="IPR056818">
    <property type="entry name" value="GlmU/GlgC-like_hexapep"/>
</dbReference>
<dbReference type="InterPro" id="IPR005835">
    <property type="entry name" value="NTP_transferase_dom"/>
</dbReference>
<dbReference type="InterPro" id="IPR029044">
    <property type="entry name" value="Nucleotide-diphossugar_trans"/>
</dbReference>
<dbReference type="InterPro" id="IPR011004">
    <property type="entry name" value="Trimer_LpxA-like_sf"/>
</dbReference>
<dbReference type="NCBIfam" id="TIGR02091">
    <property type="entry name" value="glgC"/>
    <property type="match status" value="1"/>
</dbReference>
<dbReference type="NCBIfam" id="NF003670">
    <property type="entry name" value="PRK05293.1"/>
    <property type="match status" value="1"/>
</dbReference>
<dbReference type="PANTHER" id="PTHR43523:SF2">
    <property type="entry name" value="GLUCOSE-1-PHOSPHATE ADENYLYLTRANSFERASE"/>
    <property type="match status" value="1"/>
</dbReference>
<dbReference type="PANTHER" id="PTHR43523">
    <property type="entry name" value="GLUCOSE-1-PHOSPHATE ADENYLYLTRANSFERASE-RELATED"/>
    <property type="match status" value="1"/>
</dbReference>
<dbReference type="Pfam" id="PF24894">
    <property type="entry name" value="Hexapep_GlmU"/>
    <property type="match status" value="1"/>
</dbReference>
<dbReference type="Pfam" id="PF00483">
    <property type="entry name" value="NTP_transferase"/>
    <property type="match status" value="1"/>
</dbReference>
<dbReference type="SUPFAM" id="SSF53448">
    <property type="entry name" value="Nucleotide-diphospho-sugar transferases"/>
    <property type="match status" value="1"/>
</dbReference>
<dbReference type="SUPFAM" id="SSF51161">
    <property type="entry name" value="Trimeric LpxA-like enzymes"/>
    <property type="match status" value="1"/>
</dbReference>
<dbReference type="PROSITE" id="PS00808">
    <property type="entry name" value="ADP_GLC_PYROPHOSPH_1"/>
    <property type="match status" value="1"/>
</dbReference>
<dbReference type="PROSITE" id="PS00809">
    <property type="entry name" value="ADP_GLC_PYROPHOSPH_2"/>
    <property type="match status" value="1"/>
</dbReference>
<dbReference type="PROSITE" id="PS00810">
    <property type="entry name" value="ADP_GLC_PYROPHOSPH_3"/>
    <property type="match status" value="1"/>
</dbReference>
<proteinExistence type="inferred from homology"/>
<accession>Q1WSM9</accession>
<feature type="chain" id="PRO_0000261877" description="Glucose-1-phosphate adenylyltransferase">
    <location>
        <begin position="1"/>
        <end position="380"/>
    </location>
</feature>
<feature type="binding site" evidence="1">
    <location>
        <position position="164"/>
    </location>
    <ligand>
        <name>alpha-D-glucose 1-phosphate</name>
        <dbReference type="ChEBI" id="CHEBI:58601"/>
    </ligand>
</feature>
<feature type="binding site" evidence="1">
    <location>
        <begin position="179"/>
        <end position="180"/>
    </location>
    <ligand>
        <name>alpha-D-glucose 1-phosphate</name>
        <dbReference type="ChEBI" id="CHEBI:58601"/>
    </ligand>
</feature>
<feature type="binding site" evidence="1">
    <location>
        <position position="190"/>
    </location>
    <ligand>
        <name>alpha-D-glucose 1-phosphate</name>
        <dbReference type="ChEBI" id="CHEBI:58601"/>
    </ligand>
</feature>